<reference key="1">
    <citation type="submission" date="1997-02" db="EMBL/GenBank/DDBJ databases">
        <authorList>
            <person name="Naithani S."/>
        </authorList>
    </citation>
    <scope>NUCLEOTIDE SEQUENCE [GENOMIC DNA]</scope>
    <source>
        <strain>cv. Stoneville D121</strain>
        <tissue>Leaf</tissue>
    </source>
</reference>
<comment type="function">
    <text evidence="1">This b-type cytochrome is tightly associated with the reaction center of photosystem II (PSII). PSII is a light-driven water:plastoquinone oxidoreductase that uses light energy to abstract electrons from H(2)O, generating O(2) and a proton gradient subsequently used for ATP formation. It consists of a core antenna complex that captures photons, and an electron transfer chain that converts photonic excitation into a charge separation.</text>
</comment>
<comment type="cofactor">
    <cofactor evidence="1">
        <name>heme b</name>
        <dbReference type="ChEBI" id="CHEBI:60344"/>
    </cofactor>
    <text evidence="1">With its partner (PsbF) binds heme. PSII binds additional chlorophylls, carotenoids and specific lipids.</text>
</comment>
<comment type="subunit">
    <text evidence="1">Heterodimer of an alpha subunit and a beta subunit. PSII is composed of 1 copy each of membrane proteins PsbA, PsbB, PsbC, PsbD, PsbE, PsbF, PsbH, PsbI, PsbJ, PsbK, PsbL, PsbM, PsbT, PsbX, PsbY, PsbZ, Psb30/Ycf12, at least 3 peripheral proteins of the oxygen-evolving complex and a large number of cofactors. It forms dimeric complexes.</text>
</comment>
<comment type="subcellular location">
    <subcellularLocation>
        <location evidence="1">Plastid</location>
        <location evidence="1">Chloroplast thylakoid membrane</location>
        <topology evidence="1">Single-pass membrane protein</topology>
    </subcellularLocation>
</comment>
<comment type="similarity">
    <text evidence="1">Belongs to the PsbE/PsbF family.</text>
</comment>
<gene>
    <name evidence="1" type="primary">psbE</name>
</gene>
<dbReference type="EMBL" id="X89651">
    <property type="protein sequence ID" value="CAA61798.1"/>
    <property type="molecule type" value="Genomic_DNA"/>
</dbReference>
<dbReference type="RefSeq" id="YP_009555914.1">
    <property type="nucleotide sequence ID" value="NC_040929.1"/>
</dbReference>
<dbReference type="SMR" id="P69385"/>
<dbReference type="GeneID" id="39110644"/>
<dbReference type="GO" id="GO:0009535">
    <property type="term" value="C:chloroplast thylakoid membrane"/>
    <property type="evidence" value="ECO:0007669"/>
    <property type="project" value="UniProtKB-SubCell"/>
</dbReference>
<dbReference type="GO" id="GO:0009539">
    <property type="term" value="C:photosystem II reaction center"/>
    <property type="evidence" value="ECO:0007669"/>
    <property type="project" value="InterPro"/>
</dbReference>
<dbReference type="GO" id="GO:0009055">
    <property type="term" value="F:electron transfer activity"/>
    <property type="evidence" value="ECO:0007669"/>
    <property type="project" value="UniProtKB-UniRule"/>
</dbReference>
<dbReference type="GO" id="GO:0020037">
    <property type="term" value="F:heme binding"/>
    <property type="evidence" value="ECO:0007669"/>
    <property type="project" value="InterPro"/>
</dbReference>
<dbReference type="GO" id="GO:0005506">
    <property type="term" value="F:iron ion binding"/>
    <property type="evidence" value="ECO:0007669"/>
    <property type="project" value="UniProtKB-UniRule"/>
</dbReference>
<dbReference type="GO" id="GO:0009767">
    <property type="term" value="P:photosynthetic electron transport chain"/>
    <property type="evidence" value="ECO:0007669"/>
    <property type="project" value="InterPro"/>
</dbReference>
<dbReference type="Gene3D" id="1.20.5.860">
    <property type="entry name" value="Photosystem II cytochrome b559, alpha subunit"/>
    <property type="match status" value="1"/>
</dbReference>
<dbReference type="HAMAP" id="MF_00642">
    <property type="entry name" value="PSII_PsbE"/>
    <property type="match status" value="1"/>
</dbReference>
<dbReference type="InterPro" id="IPR006217">
    <property type="entry name" value="PSII_cyt_b559_asu"/>
</dbReference>
<dbReference type="InterPro" id="IPR037025">
    <property type="entry name" value="PSII_cyt_b559_asu_sf"/>
</dbReference>
<dbReference type="InterPro" id="IPR006216">
    <property type="entry name" value="PSII_cyt_b559_CS"/>
</dbReference>
<dbReference type="InterPro" id="IPR013081">
    <property type="entry name" value="PSII_cyt_b559_N"/>
</dbReference>
<dbReference type="InterPro" id="IPR013082">
    <property type="entry name" value="PSII_cytb559_asu_lum"/>
</dbReference>
<dbReference type="NCBIfam" id="TIGR01332">
    <property type="entry name" value="cyt_b559_alpha"/>
    <property type="match status" value="1"/>
</dbReference>
<dbReference type="PANTHER" id="PTHR33391">
    <property type="entry name" value="CYTOCHROME B559 SUBUNIT BETA-RELATED"/>
    <property type="match status" value="1"/>
</dbReference>
<dbReference type="PANTHER" id="PTHR33391:SF9">
    <property type="entry name" value="CYTOCHROME B559 SUBUNIT BETA-RELATED"/>
    <property type="match status" value="1"/>
</dbReference>
<dbReference type="Pfam" id="PF00283">
    <property type="entry name" value="Cytochrom_B559"/>
    <property type="match status" value="1"/>
</dbReference>
<dbReference type="Pfam" id="PF00284">
    <property type="entry name" value="Cytochrom_B559a"/>
    <property type="match status" value="1"/>
</dbReference>
<dbReference type="PIRSF" id="PIRSF000036">
    <property type="entry name" value="PsbE"/>
    <property type="match status" value="1"/>
</dbReference>
<dbReference type="SUPFAM" id="SSF161045">
    <property type="entry name" value="Cytochrome b559 subunits"/>
    <property type="match status" value="1"/>
</dbReference>
<dbReference type="PROSITE" id="PS00537">
    <property type="entry name" value="CYTOCHROME_B559"/>
    <property type="match status" value="1"/>
</dbReference>
<name>PSBE_POPDE</name>
<organism>
    <name type="scientific">Populus deltoides</name>
    <name type="common">Eastern poplar</name>
    <name type="synonym">Eastern cottonwood</name>
    <dbReference type="NCBI Taxonomy" id="3696"/>
    <lineage>
        <taxon>Eukaryota</taxon>
        <taxon>Viridiplantae</taxon>
        <taxon>Streptophyta</taxon>
        <taxon>Embryophyta</taxon>
        <taxon>Tracheophyta</taxon>
        <taxon>Spermatophyta</taxon>
        <taxon>Magnoliopsida</taxon>
        <taxon>eudicotyledons</taxon>
        <taxon>Gunneridae</taxon>
        <taxon>Pentapetalae</taxon>
        <taxon>rosids</taxon>
        <taxon>fabids</taxon>
        <taxon>Malpighiales</taxon>
        <taxon>Salicaceae</taxon>
        <taxon>Saliceae</taxon>
        <taxon>Populus</taxon>
    </lineage>
</organism>
<protein>
    <recommendedName>
        <fullName evidence="1">Cytochrome b559 subunit alpha</fullName>
    </recommendedName>
    <alternativeName>
        <fullName evidence="1">PSII reaction center subunit V</fullName>
    </alternativeName>
</protein>
<keyword id="KW-0150">Chloroplast</keyword>
<keyword id="KW-0249">Electron transport</keyword>
<keyword id="KW-0349">Heme</keyword>
<keyword id="KW-0408">Iron</keyword>
<keyword id="KW-0472">Membrane</keyword>
<keyword id="KW-0479">Metal-binding</keyword>
<keyword id="KW-0602">Photosynthesis</keyword>
<keyword id="KW-0604">Photosystem II</keyword>
<keyword id="KW-0934">Plastid</keyword>
<keyword id="KW-0793">Thylakoid</keyword>
<keyword id="KW-0812">Transmembrane</keyword>
<keyword id="KW-1133">Transmembrane helix</keyword>
<keyword id="KW-0813">Transport</keyword>
<accession>P69385</accession>
<accession>P05168</accession>
<geneLocation type="chloroplast"/>
<feature type="chain" id="PRO_0000200333" description="Cytochrome b559 subunit alpha">
    <location>
        <begin position="1"/>
        <end position="83"/>
    </location>
</feature>
<feature type="transmembrane region" description="Helical" evidence="1">
    <location>
        <begin position="21"/>
        <end position="35"/>
    </location>
</feature>
<feature type="binding site" description="axial binding residue" evidence="1">
    <location>
        <position position="23"/>
    </location>
    <ligand>
        <name>heme</name>
        <dbReference type="ChEBI" id="CHEBI:30413"/>
        <note>ligand shared with beta subunit</note>
    </ligand>
    <ligandPart>
        <name>Fe</name>
        <dbReference type="ChEBI" id="CHEBI:18248"/>
    </ligandPart>
</feature>
<proteinExistence type="inferred from homology"/>
<sequence length="83" mass="9397">MSGSTGERSFADIITSIRYWVIHSITIPSLFIAGWLFVSTGLAYDVFGSPRPNEYFTESRQGIPLITGRFDPLEQLDEFSRSF</sequence>
<evidence type="ECO:0000255" key="1">
    <source>
        <dbReference type="HAMAP-Rule" id="MF_00642"/>
    </source>
</evidence>